<keyword id="KW-0966">Cell projection</keyword>
<keyword id="KW-0963">Cytoplasm</keyword>
<keyword id="KW-1015">Disulfide bond</keyword>
<keyword id="KW-0325">Glycoprotein</keyword>
<keyword id="KW-0378">Hydrolase</keyword>
<keyword id="KW-0443">Lipid metabolism</keyword>
<keyword id="KW-0472">Membrane</keyword>
<keyword id="KW-0524">Neurogenesis</keyword>
<keyword id="KW-1185">Reference proteome</keyword>
<keyword id="KW-0812">Transmembrane</keyword>
<keyword id="KW-1133">Transmembrane helix</keyword>
<protein>
    <recommendedName>
        <fullName evidence="8">Glycerophosphodiester phosphodiesterase domain-containing protein 5</fullName>
    </recommendedName>
    <alternativeName>
        <fullName evidence="8">Glycerophosphocholine phosphodiesterase GDPD5</fullName>
        <ecNumber evidence="6">3.1.4.2</ecNumber>
    </alternativeName>
    <alternativeName>
        <fullName>Glycerophosphodiester phosphodiesterase 2</fullName>
    </alternativeName>
    <alternativeName>
        <fullName evidence="8">Phosphoinositide phospholipase C GDPD5</fullName>
        <ecNumber evidence="1">3.1.4.11</ecNumber>
    </alternativeName>
</protein>
<organism>
    <name type="scientific">Mus musculus</name>
    <name type="common">Mouse</name>
    <dbReference type="NCBI Taxonomy" id="10090"/>
    <lineage>
        <taxon>Eukaryota</taxon>
        <taxon>Metazoa</taxon>
        <taxon>Chordata</taxon>
        <taxon>Craniata</taxon>
        <taxon>Vertebrata</taxon>
        <taxon>Euteleostomi</taxon>
        <taxon>Mammalia</taxon>
        <taxon>Eutheria</taxon>
        <taxon>Euarchontoglires</taxon>
        <taxon>Glires</taxon>
        <taxon>Rodentia</taxon>
        <taxon>Myomorpha</taxon>
        <taxon>Muroidea</taxon>
        <taxon>Muridae</taxon>
        <taxon>Murinae</taxon>
        <taxon>Mus</taxon>
        <taxon>Mus</taxon>
    </lineage>
</organism>
<reference key="1">
    <citation type="journal article" date="2005" name="Science">
        <title>The transcriptional landscape of the mammalian genome.</title>
        <authorList>
            <person name="Carninci P."/>
            <person name="Kasukawa T."/>
            <person name="Katayama S."/>
            <person name="Gough J."/>
            <person name="Frith M.C."/>
            <person name="Maeda N."/>
            <person name="Oyama R."/>
            <person name="Ravasi T."/>
            <person name="Lenhard B."/>
            <person name="Wells C."/>
            <person name="Kodzius R."/>
            <person name="Shimokawa K."/>
            <person name="Bajic V.B."/>
            <person name="Brenner S.E."/>
            <person name="Batalov S."/>
            <person name="Forrest A.R."/>
            <person name="Zavolan M."/>
            <person name="Davis M.J."/>
            <person name="Wilming L.G."/>
            <person name="Aidinis V."/>
            <person name="Allen J.E."/>
            <person name="Ambesi-Impiombato A."/>
            <person name="Apweiler R."/>
            <person name="Aturaliya R.N."/>
            <person name="Bailey T.L."/>
            <person name="Bansal M."/>
            <person name="Baxter L."/>
            <person name="Beisel K.W."/>
            <person name="Bersano T."/>
            <person name="Bono H."/>
            <person name="Chalk A.M."/>
            <person name="Chiu K.P."/>
            <person name="Choudhary V."/>
            <person name="Christoffels A."/>
            <person name="Clutterbuck D.R."/>
            <person name="Crowe M.L."/>
            <person name="Dalla E."/>
            <person name="Dalrymple B.P."/>
            <person name="de Bono B."/>
            <person name="Della Gatta G."/>
            <person name="di Bernardo D."/>
            <person name="Down T."/>
            <person name="Engstrom P."/>
            <person name="Fagiolini M."/>
            <person name="Faulkner G."/>
            <person name="Fletcher C.F."/>
            <person name="Fukushima T."/>
            <person name="Furuno M."/>
            <person name="Futaki S."/>
            <person name="Gariboldi M."/>
            <person name="Georgii-Hemming P."/>
            <person name="Gingeras T.R."/>
            <person name="Gojobori T."/>
            <person name="Green R.E."/>
            <person name="Gustincich S."/>
            <person name="Harbers M."/>
            <person name="Hayashi Y."/>
            <person name="Hensch T.K."/>
            <person name="Hirokawa N."/>
            <person name="Hill D."/>
            <person name="Huminiecki L."/>
            <person name="Iacono M."/>
            <person name="Ikeo K."/>
            <person name="Iwama A."/>
            <person name="Ishikawa T."/>
            <person name="Jakt M."/>
            <person name="Kanapin A."/>
            <person name="Katoh M."/>
            <person name="Kawasawa Y."/>
            <person name="Kelso J."/>
            <person name="Kitamura H."/>
            <person name="Kitano H."/>
            <person name="Kollias G."/>
            <person name="Krishnan S.P."/>
            <person name="Kruger A."/>
            <person name="Kummerfeld S.K."/>
            <person name="Kurochkin I.V."/>
            <person name="Lareau L.F."/>
            <person name="Lazarevic D."/>
            <person name="Lipovich L."/>
            <person name="Liu J."/>
            <person name="Liuni S."/>
            <person name="McWilliam S."/>
            <person name="Madan Babu M."/>
            <person name="Madera M."/>
            <person name="Marchionni L."/>
            <person name="Matsuda H."/>
            <person name="Matsuzawa S."/>
            <person name="Miki H."/>
            <person name="Mignone F."/>
            <person name="Miyake S."/>
            <person name="Morris K."/>
            <person name="Mottagui-Tabar S."/>
            <person name="Mulder N."/>
            <person name="Nakano N."/>
            <person name="Nakauchi H."/>
            <person name="Ng P."/>
            <person name="Nilsson R."/>
            <person name="Nishiguchi S."/>
            <person name="Nishikawa S."/>
            <person name="Nori F."/>
            <person name="Ohara O."/>
            <person name="Okazaki Y."/>
            <person name="Orlando V."/>
            <person name="Pang K.C."/>
            <person name="Pavan W.J."/>
            <person name="Pavesi G."/>
            <person name="Pesole G."/>
            <person name="Petrovsky N."/>
            <person name="Piazza S."/>
            <person name="Reed J."/>
            <person name="Reid J.F."/>
            <person name="Ring B.Z."/>
            <person name="Ringwald M."/>
            <person name="Rost B."/>
            <person name="Ruan Y."/>
            <person name="Salzberg S.L."/>
            <person name="Sandelin A."/>
            <person name="Schneider C."/>
            <person name="Schoenbach C."/>
            <person name="Sekiguchi K."/>
            <person name="Semple C.A."/>
            <person name="Seno S."/>
            <person name="Sessa L."/>
            <person name="Sheng Y."/>
            <person name="Shibata Y."/>
            <person name="Shimada H."/>
            <person name="Shimada K."/>
            <person name="Silva D."/>
            <person name="Sinclair B."/>
            <person name="Sperling S."/>
            <person name="Stupka E."/>
            <person name="Sugiura K."/>
            <person name="Sultana R."/>
            <person name="Takenaka Y."/>
            <person name="Taki K."/>
            <person name="Tammoja K."/>
            <person name="Tan S.L."/>
            <person name="Tang S."/>
            <person name="Taylor M.S."/>
            <person name="Tegner J."/>
            <person name="Teichmann S.A."/>
            <person name="Ueda H.R."/>
            <person name="van Nimwegen E."/>
            <person name="Verardo R."/>
            <person name="Wei C.L."/>
            <person name="Yagi K."/>
            <person name="Yamanishi H."/>
            <person name="Zabarovsky E."/>
            <person name="Zhu S."/>
            <person name="Zimmer A."/>
            <person name="Hide W."/>
            <person name="Bult C."/>
            <person name="Grimmond S.M."/>
            <person name="Teasdale R.D."/>
            <person name="Liu E.T."/>
            <person name="Brusic V."/>
            <person name="Quackenbush J."/>
            <person name="Wahlestedt C."/>
            <person name="Mattick J.S."/>
            <person name="Hume D.A."/>
            <person name="Kai C."/>
            <person name="Sasaki D."/>
            <person name="Tomaru Y."/>
            <person name="Fukuda S."/>
            <person name="Kanamori-Katayama M."/>
            <person name="Suzuki M."/>
            <person name="Aoki J."/>
            <person name="Arakawa T."/>
            <person name="Iida J."/>
            <person name="Imamura K."/>
            <person name="Itoh M."/>
            <person name="Kato T."/>
            <person name="Kawaji H."/>
            <person name="Kawagashira N."/>
            <person name="Kawashima T."/>
            <person name="Kojima M."/>
            <person name="Kondo S."/>
            <person name="Konno H."/>
            <person name="Nakano K."/>
            <person name="Ninomiya N."/>
            <person name="Nishio T."/>
            <person name="Okada M."/>
            <person name="Plessy C."/>
            <person name="Shibata K."/>
            <person name="Shiraki T."/>
            <person name="Suzuki S."/>
            <person name="Tagami M."/>
            <person name="Waki K."/>
            <person name="Watahiki A."/>
            <person name="Okamura-Oho Y."/>
            <person name="Suzuki H."/>
            <person name="Kawai J."/>
            <person name="Hayashizaki Y."/>
        </authorList>
    </citation>
    <scope>NUCLEOTIDE SEQUENCE [LARGE SCALE MRNA]</scope>
    <source>
        <strain>C57BL/6J</strain>
        <strain>NOD</strain>
        <tissue>Cerebellum</tissue>
    </source>
</reference>
<reference key="2">
    <citation type="journal article" date="2004" name="Genome Res.">
        <title>The status, quality, and expansion of the NIH full-length cDNA project: the Mammalian Gene Collection (MGC).</title>
        <authorList>
            <consortium name="The MGC Project Team"/>
        </authorList>
    </citation>
    <scope>NUCLEOTIDE SEQUENCE [LARGE SCALE MRNA]</scope>
    <source>
        <strain>C57BL/6J</strain>
        <strain>FVB/N</strain>
        <tissue>Colon</tissue>
        <tissue>Eye</tissue>
        <tissue>Mammary gland</tissue>
    </source>
</reference>
<reference key="3">
    <citation type="journal article" date="2004" name="Gene">
        <title>Isolation and characterization of two serpentine membrane proteins containing glycerophosphodiester phosphodiesterase, GDE2 and GDE6.</title>
        <authorList>
            <person name="Nogusa Y."/>
            <person name="Fujioka Y."/>
            <person name="Komatsu R."/>
            <person name="Kato N."/>
            <person name="Yanaka N."/>
        </authorList>
    </citation>
    <scope>SUBCELLULAR LOCATION</scope>
    <scope>TISSUE SPECIFICITY</scope>
</reference>
<reference key="4">
    <citation type="journal article" date="2007" name="FEBS Lett.">
        <title>Involvement of membrane protein GDE2 in retinoic acid-induced neurite formation in Neuro2A cells.</title>
        <authorList>
            <person name="Yanaka N."/>
            <person name="Nogusa Y."/>
            <person name="Fujioka Y."/>
            <person name="Yamashita Y."/>
            <person name="Kato N."/>
        </authorList>
    </citation>
    <scope>FUNCTION</scope>
    <scope>SUBCELLULAR LOCATION</scope>
    <scope>INDUCTION</scope>
</reference>
<reference key="5">
    <citation type="journal article" date="2008" name="Proc. Natl. Acad. Sci. U.S.A.">
        <title>GDPD5 is a glycerophosphocholine phosphodiesterase that osmotically regulates the osmoprotective organic osmolyte GPC.</title>
        <authorList>
            <person name="Gallazzini M."/>
            <person name="Ferraris J.D."/>
            <person name="Burg M.B."/>
        </authorList>
    </citation>
    <scope>FUNCTION</scope>
    <scope>SUBCELLULAR LOCATION</scope>
    <scope>CATALYTIC ACTIVITY</scope>
    <scope>INDUCTION</scope>
    <scope>ACTIVITY REGULATION</scope>
</reference>
<feature type="chain" id="PRO_0000251942" description="Glycerophosphodiester phosphodiesterase domain-containing protein 5">
    <location>
        <begin position="1"/>
        <end position="607"/>
    </location>
</feature>
<feature type="topological domain" description="Cytoplasmic" evidence="2">
    <location>
        <begin position="1"/>
        <end position="42"/>
    </location>
</feature>
<feature type="transmembrane region" description="Helical" evidence="2">
    <location>
        <begin position="43"/>
        <end position="63"/>
    </location>
</feature>
<feature type="topological domain" description="Extracellular" evidence="2">
    <location>
        <begin position="64"/>
        <end position="89"/>
    </location>
</feature>
<feature type="transmembrane region" description="Helical" evidence="2">
    <location>
        <begin position="90"/>
        <end position="110"/>
    </location>
</feature>
<feature type="topological domain" description="Cytoplasmic" evidence="2">
    <location>
        <begin position="111"/>
        <end position="125"/>
    </location>
</feature>
<feature type="transmembrane region" description="Helical" evidence="2">
    <location>
        <begin position="126"/>
        <end position="146"/>
    </location>
</feature>
<feature type="topological domain" description="Extracellular" evidence="2">
    <location>
        <begin position="147"/>
        <end position="160"/>
    </location>
</feature>
<feature type="transmembrane region" description="Helical" evidence="2">
    <location>
        <begin position="161"/>
        <end position="181"/>
    </location>
</feature>
<feature type="topological domain" description="Cytoplasmic" evidence="2">
    <location>
        <begin position="182"/>
        <end position="192"/>
    </location>
</feature>
<feature type="transmembrane region" description="Helical" evidence="2">
    <location>
        <begin position="193"/>
        <end position="213"/>
    </location>
</feature>
<feature type="topological domain" description="Extracellular" evidence="2">
    <location>
        <begin position="214"/>
        <end position="496"/>
    </location>
</feature>
<feature type="transmembrane region" description="Helical" evidence="2">
    <location>
        <begin position="497"/>
        <end position="517"/>
    </location>
</feature>
<feature type="topological domain" description="Cytoplasmic" evidence="2">
    <location>
        <begin position="518"/>
        <end position="607"/>
    </location>
</feature>
<feature type="domain" description="GP-PDE">
    <location>
        <begin position="228"/>
        <end position="485"/>
    </location>
</feature>
<feature type="region of interest" description="Disordered" evidence="3">
    <location>
        <begin position="582"/>
        <end position="607"/>
    </location>
</feature>
<feature type="glycosylation site" description="N-linked (GlcNAc...) asparagine" evidence="2">
    <location>
        <position position="301"/>
    </location>
</feature>
<feature type="glycosylation site" description="N-linked (GlcNAc...) asparagine" evidence="2">
    <location>
        <position position="336"/>
    </location>
</feature>
<feature type="glycosylation site" description="N-linked (GlcNAc...) asparagine" evidence="2">
    <location>
        <position position="352"/>
    </location>
</feature>
<feature type="glycosylation site" description="N-linked (GlcNAc...) asparagine" evidence="2">
    <location>
        <position position="374"/>
    </location>
</feature>
<feature type="glycosylation site" description="N-linked (GlcNAc...) asparagine" evidence="2">
    <location>
        <position position="448"/>
    </location>
</feature>
<feature type="disulfide bond" evidence="1">
    <location>
        <begin position="15"/>
        <end position="18"/>
    </location>
</feature>
<feature type="disulfide bond" evidence="1">
    <location>
        <begin position="25"/>
        <end position="571"/>
    </location>
</feature>
<feature type="sequence conflict" description="In Ref. 2; AAH24955." evidence="8" ref="2">
    <original>P</original>
    <variation>L</variation>
    <location>
        <position position="399"/>
    </location>
</feature>
<feature type="sequence conflict" description="In Ref. 2; AAH26428." evidence="8" ref="2">
    <original>E</original>
    <variation>G</variation>
    <location>
        <position position="567"/>
    </location>
</feature>
<comment type="function">
    <text evidence="1 5 6">Glycerophosphodiester phosphodiesterase that promotes neurite formation and drives spinal motor neuron differentiation (PubMed:17275818, PubMed:18667693). Mediates the cleavage of glycosylphosphatidylinositol (GPI) anchor of target proteins: removes the GPI-anchor of RECK, leading to release RECK from the plasma membrane (By similarity). May contribute to the osmotic regulation of cellular glycerophosphocholine (PubMed:18667693).</text>
</comment>
<comment type="catalytic activity">
    <reaction evidence="1">
        <text>a 1,2-diacyl-sn-glycero-3-phospho-(1D-myo-inositol-4,5-bisphosphate) + H2O = 1D-myo-inositol 1,4,5-trisphosphate + a 1,2-diacyl-sn-glycerol + H(+)</text>
        <dbReference type="Rhea" id="RHEA:33179"/>
        <dbReference type="ChEBI" id="CHEBI:15377"/>
        <dbReference type="ChEBI" id="CHEBI:15378"/>
        <dbReference type="ChEBI" id="CHEBI:17815"/>
        <dbReference type="ChEBI" id="CHEBI:58456"/>
        <dbReference type="ChEBI" id="CHEBI:203600"/>
        <dbReference type="EC" id="3.1.4.11"/>
    </reaction>
</comment>
<comment type="catalytic activity">
    <reaction evidence="6">
        <text>sn-glycerol 3-phosphocholine + H2O = sn-glycerol 3-phosphate + choline + H(+)</text>
        <dbReference type="Rhea" id="RHEA:16061"/>
        <dbReference type="ChEBI" id="CHEBI:15354"/>
        <dbReference type="ChEBI" id="CHEBI:15377"/>
        <dbReference type="ChEBI" id="CHEBI:15378"/>
        <dbReference type="ChEBI" id="CHEBI:16870"/>
        <dbReference type="ChEBI" id="CHEBI:57597"/>
        <dbReference type="EC" id="3.1.4.2"/>
    </reaction>
    <physiologicalReaction direction="left-to-right" evidence="10">
        <dbReference type="Rhea" id="RHEA:16062"/>
    </physiologicalReaction>
</comment>
<comment type="activity regulation">
    <text evidence="6">Inhibited by high level of NaCl or urea.</text>
</comment>
<comment type="subunit">
    <text evidence="1">Interacts with PRDX1; forms a mixed-disulfide with PRDX1, leading to disrupt intramolecular disulfide bond between Cys-25 and Cys-571.</text>
</comment>
<comment type="subcellular location">
    <subcellularLocation>
        <location evidence="5 6 9">Endomembrane system</location>
        <topology evidence="2">Multi-pass membrane protein</topology>
    </subcellularLocation>
    <subcellularLocation>
        <location evidence="4 5 6">Cytoplasm</location>
        <location evidence="4 5 6">Perinuclear region</location>
    </subcellularLocation>
    <subcellularLocation>
        <location evidence="5">Cell projection</location>
        <location evidence="5">Growth cone</location>
    </subcellularLocation>
</comment>
<comment type="tissue specificity">
    <text evidence="4">Detected in brain, lung, heart, kidney and testis.</text>
</comment>
<comment type="induction">
    <text evidence="5 6">Up-regulated during neuronal differentiation by retinoic acid. Down regulated by high NaCl or urea (PubMed:18667693).</text>
</comment>
<comment type="PTM">
    <text evidence="1">Intramolecular disulfide bond between Cys-25 and Cys-571 is reduced by PRDX1.</text>
</comment>
<comment type="similarity">
    <text evidence="8">Belongs to the glycerophosphoryl diester phosphodiesterase family.</text>
</comment>
<comment type="sequence caution" evidence="8">
    <conflict type="erroneous initiation">
        <sequence resource="EMBL-CDS" id="AAH26428"/>
    </conflict>
</comment>
<name>GDPD5_MOUSE</name>
<evidence type="ECO:0000250" key="1">
    <source>
        <dbReference type="UniProtKB" id="Q3KTM2"/>
    </source>
</evidence>
<evidence type="ECO:0000255" key="2"/>
<evidence type="ECO:0000256" key="3">
    <source>
        <dbReference type="SAM" id="MobiDB-lite"/>
    </source>
</evidence>
<evidence type="ECO:0000269" key="4">
    <source>
    </source>
</evidence>
<evidence type="ECO:0000269" key="5">
    <source>
    </source>
</evidence>
<evidence type="ECO:0000269" key="6">
    <source>
    </source>
</evidence>
<evidence type="ECO:0000303" key="7">
    <source>
    </source>
</evidence>
<evidence type="ECO:0000305" key="8"/>
<evidence type="ECO:0000305" key="9">
    <source>
    </source>
</evidence>
<evidence type="ECO:0000305" key="10">
    <source>
    </source>
</evidence>
<evidence type="ECO:0000312" key="11">
    <source>
        <dbReference type="MGI" id="MGI:2686926"/>
    </source>
</evidence>
<accession>Q640M6</accession>
<accession>Q8R0T5</accession>
<accession>Q8R3N5</accession>
<sequence>MVRHQPLQYYEPQLCLSCLTGIYGCRWKRYQRSHDDTTPWERLWFLLLVCTFSLTLTWLYFWWGVHNDYDEFNWYLYNRMGYWSDWSVPILVTSAAAFTYIAGLLVLALCHIAVGQQLNLHWIHKMGLVVILASTVVAMSAVAQLWEDEWEVLLISLQGTAPFLHIGALVAITALSWIVAGQFARAERSSSQLTILCTFFAVVFTFYLIPLTISSPCIMEKKDLGPKPALIGHRGAPMLAPEHTVMSFRKALEQRLYGLQADITISLDGVPFLMHDTTLRRTTNVEHLFPELARRPAAMLNWTVLQRLNAGQWFLKTDPFWTASSLSPSDHREVQNQSICSLAELLELAKGNASLLLNLRDPPRDHPYRGSFLNVTLEAVLRSGFPQHQVMWLFNRQRPLVRKMAPGFQQTSGSKEAIANLRKGHIQKLNLRYTQVSHQELRDYASWNLSVNLYTVNAPWLFSLLWCAGVPSVTSDNSHTLSRVPSPLWIMPPDEYCLMWVTADLISFSLIIGIFVLQKWRLGGIRSYNPEQIMLSAAVRRTSRDVSIMKEKLIFSEISDGVEVSDELSVCSDSSYDTYANANSTATPVGPRNAGSRAKTVTEQSGH</sequence>
<gene>
    <name evidence="11" type="primary">Gdpd5</name>
    <name evidence="7" type="synonym">Gde2</name>
</gene>
<dbReference type="EC" id="3.1.4.2" evidence="6"/>
<dbReference type="EC" id="3.1.4.11" evidence="1"/>
<dbReference type="EMBL" id="AK141189">
    <property type="protein sequence ID" value="BAE24577.1"/>
    <property type="molecule type" value="mRNA"/>
</dbReference>
<dbReference type="EMBL" id="AK154771">
    <property type="protein sequence ID" value="BAE32819.1"/>
    <property type="molecule type" value="mRNA"/>
</dbReference>
<dbReference type="EMBL" id="BC024955">
    <property type="protein sequence ID" value="AAH24955.1"/>
    <property type="molecule type" value="mRNA"/>
</dbReference>
<dbReference type="EMBL" id="BC026428">
    <property type="protein sequence ID" value="AAH26428.1"/>
    <property type="status" value="ALT_INIT"/>
    <property type="molecule type" value="mRNA"/>
</dbReference>
<dbReference type="EMBL" id="BC082585">
    <property type="protein sequence ID" value="AAH82585.1"/>
    <property type="molecule type" value="mRNA"/>
</dbReference>
<dbReference type="CCDS" id="CCDS21481.1"/>
<dbReference type="RefSeq" id="NP_001349095.1">
    <property type="nucleotide sequence ID" value="NM_001362166.1"/>
</dbReference>
<dbReference type="RefSeq" id="NP_958740.2">
    <property type="nucleotide sequence ID" value="NM_201352.2"/>
</dbReference>
<dbReference type="RefSeq" id="XP_017177670.1">
    <property type="nucleotide sequence ID" value="XM_017322181.1"/>
</dbReference>
<dbReference type="RefSeq" id="XP_036008885.1">
    <property type="nucleotide sequence ID" value="XM_036152992.1"/>
</dbReference>
<dbReference type="SMR" id="Q640M6"/>
<dbReference type="FunCoup" id="Q640M6">
    <property type="interactions" value="278"/>
</dbReference>
<dbReference type="STRING" id="10090.ENSMUSP00000036175"/>
<dbReference type="SwissLipids" id="SLP:000000668"/>
<dbReference type="GlyCosmos" id="Q640M6">
    <property type="glycosylation" value="5 sites, No reported glycans"/>
</dbReference>
<dbReference type="GlyGen" id="Q640M6">
    <property type="glycosylation" value="5 sites, 4 N-linked glycans (4 sites)"/>
</dbReference>
<dbReference type="iPTMnet" id="Q640M6"/>
<dbReference type="PhosphoSitePlus" id="Q640M6"/>
<dbReference type="PaxDb" id="10090-ENSMUSP00000036175"/>
<dbReference type="PeptideAtlas" id="Q640M6"/>
<dbReference type="ProteomicsDB" id="272951"/>
<dbReference type="Antibodypedia" id="45087">
    <property type="antibodies" value="146 antibodies from 27 providers"/>
</dbReference>
<dbReference type="Ensembl" id="ENSMUST00000037528.10">
    <property type="protein sequence ID" value="ENSMUSP00000036175.9"/>
    <property type="gene ID" value="ENSMUSG00000035314.11"/>
</dbReference>
<dbReference type="GeneID" id="233552"/>
<dbReference type="KEGG" id="mmu:233552"/>
<dbReference type="UCSC" id="uc009ilo.1">
    <property type="organism name" value="mouse"/>
</dbReference>
<dbReference type="AGR" id="MGI:2686926"/>
<dbReference type="CTD" id="81544"/>
<dbReference type="MGI" id="MGI:2686926">
    <property type="gene designation" value="Gdpd5"/>
</dbReference>
<dbReference type="VEuPathDB" id="HostDB:ENSMUSG00000035314"/>
<dbReference type="eggNOG" id="KOG2258">
    <property type="taxonomic scope" value="Eukaryota"/>
</dbReference>
<dbReference type="GeneTree" id="ENSGT00940000159690"/>
<dbReference type="HOGENOM" id="CLU_024259_1_0_1"/>
<dbReference type="InParanoid" id="Q640M6"/>
<dbReference type="OMA" id="HASMFNW"/>
<dbReference type="OrthoDB" id="1058301at2759"/>
<dbReference type="PhylomeDB" id="Q640M6"/>
<dbReference type="TreeFam" id="TF313692"/>
<dbReference type="BRENDA" id="3.1.4.44">
    <property type="organism ID" value="3474"/>
</dbReference>
<dbReference type="BRENDA" id="3.1.4.46">
    <property type="organism ID" value="3474"/>
</dbReference>
<dbReference type="BioGRID-ORCS" id="233552">
    <property type="hits" value="2 hits in 82 CRISPR screens"/>
</dbReference>
<dbReference type="ChiTaRS" id="Gdpd5">
    <property type="organism name" value="mouse"/>
</dbReference>
<dbReference type="PRO" id="PR:Q640M6"/>
<dbReference type="Proteomes" id="UP000000589">
    <property type="component" value="Chromosome 7"/>
</dbReference>
<dbReference type="RNAct" id="Q640M6">
    <property type="molecule type" value="protein"/>
</dbReference>
<dbReference type="Bgee" id="ENSMUSG00000035314">
    <property type="expression patterns" value="Expressed in pigmented layer of retina and 239 other cell types or tissues"/>
</dbReference>
<dbReference type="ExpressionAtlas" id="Q640M6">
    <property type="expression patterns" value="baseline and differential"/>
</dbReference>
<dbReference type="GO" id="GO:0030424">
    <property type="term" value="C:axon"/>
    <property type="evidence" value="ECO:0000314"/>
    <property type="project" value="CACAO"/>
</dbReference>
<dbReference type="GO" id="GO:0005789">
    <property type="term" value="C:endoplasmic reticulum membrane"/>
    <property type="evidence" value="ECO:0000304"/>
    <property type="project" value="Reactome"/>
</dbReference>
<dbReference type="GO" id="GO:0030426">
    <property type="term" value="C:growth cone"/>
    <property type="evidence" value="ECO:0007669"/>
    <property type="project" value="UniProtKB-SubCell"/>
</dbReference>
<dbReference type="GO" id="GO:0016020">
    <property type="term" value="C:membrane"/>
    <property type="evidence" value="ECO:0000314"/>
    <property type="project" value="MGI"/>
</dbReference>
<dbReference type="GO" id="GO:0043025">
    <property type="term" value="C:neuronal cell body"/>
    <property type="evidence" value="ECO:0000314"/>
    <property type="project" value="CACAO"/>
</dbReference>
<dbReference type="GO" id="GO:0097038">
    <property type="term" value="C:perinuclear endoplasmic reticulum"/>
    <property type="evidence" value="ECO:0000314"/>
    <property type="project" value="CACAO"/>
</dbReference>
<dbReference type="GO" id="GO:0047389">
    <property type="term" value="F:glycerophosphocholine phosphodiesterase activity"/>
    <property type="evidence" value="ECO:0000314"/>
    <property type="project" value="CACAO"/>
</dbReference>
<dbReference type="GO" id="GO:0008889">
    <property type="term" value="F:glycerophosphodiester phosphodiesterase activity"/>
    <property type="evidence" value="ECO:0000266"/>
    <property type="project" value="MGI"/>
</dbReference>
<dbReference type="GO" id="GO:0004435">
    <property type="term" value="F:phosphatidylinositol-4,5-bisphosphate phospholipase C activity"/>
    <property type="evidence" value="ECO:0007669"/>
    <property type="project" value="UniProtKB-EC"/>
</dbReference>
<dbReference type="GO" id="GO:0021895">
    <property type="term" value="P:cerebral cortex neuron differentiation"/>
    <property type="evidence" value="ECO:0000315"/>
    <property type="project" value="MGI"/>
</dbReference>
<dbReference type="GO" id="GO:0006629">
    <property type="term" value="P:lipid metabolic process"/>
    <property type="evidence" value="ECO:0007669"/>
    <property type="project" value="UniProtKB-KW"/>
</dbReference>
<dbReference type="GO" id="GO:0045746">
    <property type="term" value="P:negative regulation of Notch signaling pathway"/>
    <property type="evidence" value="ECO:0000314"/>
    <property type="project" value="CACAO"/>
</dbReference>
<dbReference type="GO" id="GO:0030182">
    <property type="term" value="P:neuron differentiation"/>
    <property type="evidence" value="ECO:0000315"/>
    <property type="project" value="MGI"/>
</dbReference>
<dbReference type="GO" id="GO:0031175">
    <property type="term" value="P:neuron projection development"/>
    <property type="evidence" value="ECO:0000315"/>
    <property type="project" value="MGI"/>
</dbReference>
<dbReference type="GO" id="GO:0007219">
    <property type="term" value="P:Notch signaling pathway"/>
    <property type="evidence" value="ECO:0000315"/>
    <property type="project" value="MGI"/>
</dbReference>
<dbReference type="GO" id="GO:0045787">
    <property type="term" value="P:positive regulation of cell cycle"/>
    <property type="evidence" value="ECO:0000315"/>
    <property type="project" value="CACAO"/>
</dbReference>
<dbReference type="GO" id="GO:0045666">
    <property type="term" value="P:positive regulation of neuron differentiation"/>
    <property type="evidence" value="ECO:0000315"/>
    <property type="project" value="CACAO"/>
</dbReference>
<dbReference type="GO" id="GO:0048505">
    <property type="term" value="P:regulation of timing of cell differentiation"/>
    <property type="evidence" value="ECO:0000315"/>
    <property type="project" value="MGI"/>
</dbReference>
<dbReference type="GO" id="GO:0021522">
    <property type="term" value="P:spinal cord motor neuron differentiation"/>
    <property type="evidence" value="ECO:0000315"/>
    <property type="project" value="MGI"/>
</dbReference>
<dbReference type="FunFam" id="3.20.20.190:FF:000028">
    <property type="entry name" value="Glycerophosphodiester phosphodiesterase domain-containing protein 5"/>
    <property type="match status" value="1"/>
</dbReference>
<dbReference type="Gene3D" id="3.20.20.190">
    <property type="entry name" value="Phosphatidylinositol (PI) phosphodiesterase"/>
    <property type="match status" value="1"/>
</dbReference>
<dbReference type="InterPro" id="IPR030395">
    <property type="entry name" value="GP_PDE_dom"/>
</dbReference>
<dbReference type="InterPro" id="IPR017946">
    <property type="entry name" value="PLC-like_Pdiesterase_TIM-brl"/>
</dbReference>
<dbReference type="PANTHER" id="PTHR23344:SF6">
    <property type="entry name" value="GLYCEROPHOSPHODIESTER PHOSPHODIESTERASE DOMAIN-CONTAINING PROTEIN 5"/>
    <property type="match status" value="1"/>
</dbReference>
<dbReference type="PANTHER" id="PTHR23344">
    <property type="entry name" value="GLYCEROPHOSPHORYL DIESTER PHOSPHODIESTERASE"/>
    <property type="match status" value="1"/>
</dbReference>
<dbReference type="Pfam" id="PF03009">
    <property type="entry name" value="GDPD"/>
    <property type="match status" value="1"/>
</dbReference>
<dbReference type="SUPFAM" id="SSF51695">
    <property type="entry name" value="PLC-like phosphodiesterases"/>
    <property type="match status" value="1"/>
</dbReference>
<dbReference type="PROSITE" id="PS51704">
    <property type="entry name" value="GP_PDE"/>
    <property type="match status" value="1"/>
</dbReference>
<proteinExistence type="evidence at protein level"/>